<evidence type="ECO:0000255" key="1">
    <source>
        <dbReference type="HAMAP-Rule" id="MF_01808"/>
    </source>
</evidence>
<evidence type="ECO:0000255" key="2">
    <source>
        <dbReference type="PROSITE-ProRule" id="PRU01246"/>
    </source>
</evidence>
<evidence type="ECO:0000255" key="3">
    <source>
        <dbReference type="PROSITE-ProRule" id="PRU01248"/>
    </source>
</evidence>
<comment type="function">
    <text evidence="1">Site-specific tyrosine recombinase, which acts by catalyzing the cutting and rejoining of the recombining DNA molecules. The XerC-XerD complex is essential to convert dimers of the bacterial chromosome into monomers to permit their segregation at cell division. It also contributes to the segregational stability of plasmids.</text>
</comment>
<comment type="subunit">
    <text evidence="1">Forms a cyclic heterotetrameric complex composed of two molecules of XerC and two molecules of XerD.</text>
</comment>
<comment type="subcellular location">
    <subcellularLocation>
        <location evidence="1">Cytoplasm</location>
    </subcellularLocation>
</comment>
<comment type="similarity">
    <text evidence="1">Belongs to the 'phage' integrase family. XerC subfamily.</text>
</comment>
<organism>
    <name type="scientific">Ralstonia pickettii (strain 12J)</name>
    <dbReference type="NCBI Taxonomy" id="402626"/>
    <lineage>
        <taxon>Bacteria</taxon>
        <taxon>Pseudomonadati</taxon>
        <taxon>Pseudomonadota</taxon>
        <taxon>Betaproteobacteria</taxon>
        <taxon>Burkholderiales</taxon>
        <taxon>Burkholderiaceae</taxon>
        <taxon>Ralstonia</taxon>
    </lineage>
</organism>
<feature type="chain" id="PRO_1000187611" description="Tyrosine recombinase XerC">
    <location>
        <begin position="1"/>
        <end position="328"/>
    </location>
</feature>
<feature type="domain" description="Core-binding (CB)" evidence="3">
    <location>
        <begin position="13"/>
        <end position="100"/>
    </location>
</feature>
<feature type="domain" description="Tyr recombinase" evidence="2">
    <location>
        <begin position="122"/>
        <end position="319"/>
    </location>
</feature>
<feature type="active site" evidence="1">
    <location>
        <position position="162"/>
    </location>
</feature>
<feature type="active site" evidence="1">
    <location>
        <position position="197"/>
    </location>
</feature>
<feature type="active site" evidence="1">
    <location>
        <position position="271"/>
    </location>
</feature>
<feature type="active site" evidence="1">
    <location>
        <position position="274"/>
    </location>
</feature>
<feature type="active site" evidence="1">
    <location>
        <position position="297"/>
    </location>
</feature>
<feature type="active site" description="O-(3'-phospho-DNA)-tyrosine intermediate" evidence="1">
    <location>
        <position position="306"/>
    </location>
</feature>
<name>XERC_RALPJ</name>
<sequence>MPQSASVDDHGAQAPHPQIAAYLDALKFERQLSPHTLQSYTRELAVLQRLGAQHAANIDLTQLQSHHIRRMMAQLHGDGLSGRSIARALSAWRGWFKWMALRDAAVTANPVDGVRAPKSPKRLPKALSVEQAVALMEQLPGDDAETIRDRAVNELFYSCGLRLSELVSLDMRHVKAGAYESASWLDLEAREVQVLGKGSKRRTVPVGTKATEALAAWLAVRAQLAKSDAAPEDAHALFLSPRGKRLAQRQIQLRMKRNAIAAGVPADVHPHVLRHSFATHMLQSSGDLRAVQELLGHASIASTQVYTSLDFQHLAKIYDQAHPRAKKK</sequence>
<dbReference type="EMBL" id="CP001068">
    <property type="protein sequence ID" value="ACD28815.1"/>
    <property type="molecule type" value="Genomic_DNA"/>
</dbReference>
<dbReference type="SMR" id="B2U7W2"/>
<dbReference type="STRING" id="402626.Rpic_3697"/>
<dbReference type="KEGG" id="rpi:Rpic_3697"/>
<dbReference type="eggNOG" id="COG4973">
    <property type="taxonomic scope" value="Bacteria"/>
</dbReference>
<dbReference type="HOGENOM" id="CLU_027562_9_0_4"/>
<dbReference type="GO" id="GO:0005737">
    <property type="term" value="C:cytoplasm"/>
    <property type="evidence" value="ECO:0007669"/>
    <property type="project" value="UniProtKB-SubCell"/>
</dbReference>
<dbReference type="GO" id="GO:0003677">
    <property type="term" value="F:DNA binding"/>
    <property type="evidence" value="ECO:0007669"/>
    <property type="project" value="UniProtKB-KW"/>
</dbReference>
<dbReference type="GO" id="GO:0009037">
    <property type="term" value="F:tyrosine-based site-specific recombinase activity"/>
    <property type="evidence" value="ECO:0007669"/>
    <property type="project" value="UniProtKB-UniRule"/>
</dbReference>
<dbReference type="GO" id="GO:0051301">
    <property type="term" value="P:cell division"/>
    <property type="evidence" value="ECO:0007669"/>
    <property type="project" value="UniProtKB-KW"/>
</dbReference>
<dbReference type="GO" id="GO:0007059">
    <property type="term" value="P:chromosome segregation"/>
    <property type="evidence" value="ECO:0007669"/>
    <property type="project" value="UniProtKB-UniRule"/>
</dbReference>
<dbReference type="GO" id="GO:0006313">
    <property type="term" value="P:DNA transposition"/>
    <property type="evidence" value="ECO:0007669"/>
    <property type="project" value="UniProtKB-UniRule"/>
</dbReference>
<dbReference type="CDD" id="cd00798">
    <property type="entry name" value="INT_XerDC_C"/>
    <property type="match status" value="1"/>
</dbReference>
<dbReference type="Gene3D" id="1.10.150.130">
    <property type="match status" value="1"/>
</dbReference>
<dbReference type="Gene3D" id="1.10.443.10">
    <property type="entry name" value="Intergrase catalytic core"/>
    <property type="match status" value="1"/>
</dbReference>
<dbReference type="HAMAP" id="MF_01808">
    <property type="entry name" value="Recomb_XerC_XerD"/>
    <property type="match status" value="1"/>
</dbReference>
<dbReference type="InterPro" id="IPR044068">
    <property type="entry name" value="CB"/>
</dbReference>
<dbReference type="InterPro" id="IPR011010">
    <property type="entry name" value="DNA_brk_join_enz"/>
</dbReference>
<dbReference type="InterPro" id="IPR013762">
    <property type="entry name" value="Integrase-like_cat_sf"/>
</dbReference>
<dbReference type="InterPro" id="IPR002104">
    <property type="entry name" value="Integrase_catalytic"/>
</dbReference>
<dbReference type="InterPro" id="IPR010998">
    <property type="entry name" value="Integrase_recombinase_N"/>
</dbReference>
<dbReference type="InterPro" id="IPR004107">
    <property type="entry name" value="Integrase_SAM-like_N"/>
</dbReference>
<dbReference type="InterPro" id="IPR011931">
    <property type="entry name" value="Recomb_XerC"/>
</dbReference>
<dbReference type="InterPro" id="IPR023009">
    <property type="entry name" value="Tyrosine_recombinase_XerC/XerD"/>
</dbReference>
<dbReference type="InterPro" id="IPR050090">
    <property type="entry name" value="Tyrosine_recombinase_XerCD"/>
</dbReference>
<dbReference type="NCBIfam" id="TIGR02224">
    <property type="entry name" value="recomb_XerC"/>
    <property type="match status" value="1"/>
</dbReference>
<dbReference type="PANTHER" id="PTHR30349">
    <property type="entry name" value="PHAGE INTEGRASE-RELATED"/>
    <property type="match status" value="1"/>
</dbReference>
<dbReference type="PANTHER" id="PTHR30349:SF81">
    <property type="entry name" value="TYROSINE RECOMBINASE XERC"/>
    <property type="match status" value="1"/>
</dbReference>
<dbReference type="Pfam" id="PF02899">
    <property type="entry name" value="Phage_int_SAM_1"/>
    <property type="match status" value="1"/>
</dbReference>
<dbReference type="Pfam" id="PF00589">
    <property type="entry name" value="Phage_integrase"/>
    <property type="match status" value="1"/>
</dbReference>
<dbReference type="SUPFAM" id="SSF56349">
    <property type="entry name" value="DNA breaking-rejoining enzymes"/>
    <property type="match status" value="1"/>
</dbReference>
<dbReference type="PROSITE" id="PS51900">
    <property type="entry name" value="CB"/>
    <property type="match status" value="1"/>
</dbReference>
<dbReference type="PROSITE" id="PS51898">
    <property type="entry name" value="TYR_RECOMBINASE"/>
    <property type="match status" value="1"/>
</dbReference>
<gene>
    <name evidence="1" type="primary">xerC</name>
    <name type="ordered locus">Rpic_3697</name>
</gene>
<reference key="1">
    <citation type="submission" date="2008-05" db="EMBL/GenBank/DDBJ databases">
        <title>Complete sequence of chromosome 1 of Ralstonia pickettii 12J.</title>
        <authorList>
            <person name="Lucas S."/>
            <person name="Copeland A."/>
            <person name="Lapidus A."/>
            <person name="Glavina del Rio T."/>
            <person name="Dalin E."/>
            <person name="Tice H."/>
            <person name="Bruce D."/>
            <person name="Goodwin L."/>
            <person name="Pitluck S."/>
            <person name="Meincke L."/>
            <person name="Brettin T."/>
            <person name="Detter J.C."/>
            <person name="Han C."/>
            <person name="Kuske C.R."/>
            <person name="Schmutz J."/>
            <person name="Larimer F."/>
            <person name="Land M."/>
            <person name="Hauser L."/>
            <person name="Kyrpides N."/>
            <person name="Mikhailova N."/>
            <person name="Marsh T."/>
            <person name="Richardson P."/>
        </authorList>
    </citation>
    <scope>NUCLEOTIDE SEQUENCE [LARGE SCALE GENOMIC DNA]</scope>
    <source>
        <strain>12J</strain>
    </source>
</reference>
<protein>
    <recommendedName>
        <fullName evidence="1">Tyrosine recombinase XerC</fullName>
    </recommendedName>
</protein>
<proteinExistence type="inferred from homology"/>
<keyword id="KW-0131">Cell cycle</keyword>
<keyword id="KW-0132">Cell division</keyword>
<keyword id="KW-0159">Chromosome partition</keyword>
<keyword id="KW-0963">Cytoplasm</keyword>
<keyword id="KW-0229">DNA integration</keyword>
<keyword id="KW-0233">DNA recombination</keyword>
<keyword id="KW-0238">DNA-binding</keyword>
<accession>B2U7W2</accession>